<proteinExistence type="inferred from homology"/>
<organism>
    <name type="scientific">Ruegeria pomeroyi (strain ATCC 700808 / DSM 15171 / DSS-3)</name>
    <name type="common">Silicibacter pomeroyi</name>
    <dbReference type="NCBI Taxonomy" id="246200"/>
    <lineage>
        <taxon>Bacteria</taxon>
        <taxon>Pseudomonadati</taxon>
        <taxon>Pseudomonadota</taxon>
        <taxon>Alphaproteobacteria</taxon>
        <taxon>Rhodobacterales</taxon>
        <taxon>Roseobacteraceae</taxon>
        <taxon>Ruegeria</taxon>
    </lineage>
</organism>
<gene>
    <name evidence="1" type="primary">plsX</name>
    <name type="ordered locus">SPO2493</name>
</gene>
<dbReference type="EC" id="2.3.1.274" evidence="1"/>
<dbReference type="EMBL" id="CP000031">
    <property type="protein sequence ID" value="AAV95744.1"/>
    <property type="molecule type" value="Genomic_DNA"/>
</dbReference>
<dbReference type="RefSeq" id="WP_011048201.1">
    <property type="nucleotide sequence ID" value="NC_003911.12"/>
</dbReference>
<dbReference type="SMR" id="Q5LQJ6"/>
<dbReference type="STRING" id="246200.SPO2493"/>
<dbReference type="PaxDb" id="246200-SPO2493"/>
<dbReference type="KEGG" id="sil:SPO2493"/>
<dbReference type="eggNOG" id="COG0416">
    <property type="taxonomic scope" value="Bacteria"/>
</dbReference>
<dbReference type="HOGENOM" id="CLU_039379_1_0_5"/>
<dbReference type="OrthoDB" id="9806408at2"/>
<dbReference type="UniPathway" id="UPA00085"/>
<dbReference type="Proteomes" id="UP000001023">
    <property type="component" value="Chromosome"/>
</dbReference>
<dbReference type="GO" id="GO:0005737">
    <property type="term" value="C:cytoplasm"/>
    <property type="evidence" value="ECO:0007669"/>
    <property type="project" value="UniProtKB-SubCell"/>
</dbReference>
<dbReference type="GO" id="GO:0043811">
    <property type="term" value="F:phosphate:acyl-[acyl carrier protein] acyltransferase activity"/>
    <property type="evidence" value="ECO:0007669"/>
    <property type="project" value="UniProtKB-UniRule"/>
</dbReference>
<dbReference type="GO" id="GO:0006633">
    <property type="term" value="P:fatty acid biosynthetic process"/>
    <property type="evidence" value="ECO:0007669"/>
    <property type="project" value="UniProtKB-UniRule"/>
</dbReference>
<dbReference type="GO" id="GO:0008654">
    <property type="term" value="P:phospholipid biosynthetic process"/>
    <property type="evidence" value="ECO:0007669"/>
    <property type="project" value="UniProtKB-KW"/>
</dbReference>
<dbReference type="Gene3D" id="3.40.718.10">
    <property type="entry name" value="Isopropylmalate Dehydrogenase"/>
    <property type="match status" value="1"/>
</dbReference>
<dbReference type="HAMAP" id="MF_00019">
    <property type="entry name" value="PlsX"/>
    <property type="match status" value="1"/>
</dbReference>
<dbReference type="InterPro" id="IPR003664">
    <property type="entry name" value="FA_synthesis"/>
</dbReference>
<dbReference type="InterPro" id="IPR012281">
    <property type="entry name" value="Phospholipid_synth_PlsX-like"/>
</dbReference>
<dbReference type="NCBIfam" id="TIGR00182">
    <property type="entry name" value="plsX"/>
    <property type="match status" value="1"/>
</dbReference>
<dbReference type="PANTHER" id="PTHR30100">
    <property type="entry name" value="FATTY ACID/PHOSPHOLIPID SYNTHESIS PROTEIN PLSX"/>
    <property type="match status" value="1"/>
</dbReference>
<dbReference type="PANTHER" id="PTHR30100:SF1">
    <property type="entry name" value="PHOSPHATE ACYLTRANSFERASE"/>
    <property type="match status" value="1"/>
</dbReference>
<dbReference type="Pfam" id="PF02504">
    <property type="entry name" value="FA_synthesis"/>
    <property type="match status" value="1"/>
</dbReference>
<dbReference type="PIRSF" id="PIRSF002465">
    <property type="entry name" value="Phsphlp_syn_PlsX"/>
    <property type="match status" value="1"/>
</dbReference>
<dbReference type="SUPFAM" id="SSF53659">
    <property type="entry name" value="Isocitrate/Isopropylmalate dehydrogenase-like"/>
    <property type="match status" value="1"/>
</dbReference>
<evidence type="ECO:0000255" key="1">
    <source>
        <dbReference type="HAMAP-Rule" id="MF_00019"/>
    </source>
</evidence>
<sequence length="371" mass="39075">MTAQPDQTGSASGQIIISVDAMGGDAGPSVVVAGIAKSAKKNPQVGFILHGPEDTLKKLVAKRRVLDGRVVFRDCPDVVTMEDKPSQVVRNGKNTSMWSTLESVRNGEAAGAVSCGNTGALMALSMLRLRRLPGVTRPAIAILFPSGNPQGFNVLLDAGADIRADARDLLQYALMGASYARNGMNLLRPRVGLLNVGTEEHKGKAELKEAQALIAEYAERANYEFVGFVEGSDIPGKRCDVIVTDGFTGNVAIKTGEGTARMIGSLLREAFKYSPLSRLASLLAVTSLRRLSKRIDPRRVNGGVFLGLNGTVIKSHGSADDTGISAAVKLAFTLAQSGFAERLAARVASAAALTQDEAAPTGAQAEKQESR</sequence>
<comment type="function">
    <text evidence="1">Catalyzes the reversible formation of acyl-phosphate (acyl-PO(4)) from acyl-[acyl-carrier-protein] (acyl-ACP). This enzyme utilizes acyl-ACP as fatty acyl donor, but not acyl-CoA.</text>
</comment>
<comment type="catalytic activity">
    <reaction evidence="1">
        <text>a fatty acyl-[ACP] + phosphate = an acyl phosphate + holo-[ACP]</text>
        <dbReference type="Rhea" id="RHEA:42292"/>
        <dbReference type="Rhea" id="RHEA-COMP:9685"/>
        <dbReference type="Rhea" id="RHEA-COMP:14125"/>
        <dbReference type="ChEBI" id="CHEBI:43474"/>
        <dbReference type="ChEBI" id="CHEBI:59918"/>
        <dbReference type="ChEBI" id="CHEBI:64479"/>
        <dbReference type="ChEBI" id="CHEBI:138651"/>
        <dbReference type="EC" id="2.3.1.274"/>
    </reaction>
</comment>
<comment type="pathway">
    <text evidence="1">Lipid metabolism; phospholipid metabolism.</text>
</comment>
<comment type="subunit">
    <text evidence="1">Homodimer. Probably interacts with PlsY.</text>
</comment>
<comment type="subcellular location">
    <subcellularLocation>
        <location evidence="1">Cytoplasm</location>
    </subcellularLocation>
    <text evidence="1">Associated with the membrane possibly through PlsY.</text>
</comment>
<comment type="similarity">
    <text evidence="1">Belongs to the PlsX family.</text>
</comment>
<reference key="1">
    <citation type="journal article" date="2004" name="Nature">
        <title>Genome sequence of Silicibacter pomeroyi reveals adaptations to the marine environment.</title>
        <authorList>
            <person name="Moran M.A."/>
            <person name="Buchan A."/>
            <person name="Gonzalez J.M."/>
            <person name="Heidelberg J.F."/>
            <person name="Whitman W.B."/>
            <person name="Kiene R.P."/>
            <person name="Henriksen J.R."/>
            <person name="King G.M."/>
            <person name="Belas R."/>
            <person name="Fuqua C."/>
            <person name="Brinkac L.M."/>
            <person name="Lewis M."/>
            <person name="Johri S."/>
            <person name="Weaver B."/>
            <person name="Pai G."/>
            <person name="Eisen J.A."/>
            <person name="Rahe E."/>
            <person name="Sheldon W.M."/>
            <person name="Ye W."/>
            <person name="Miller T.R."/>
            <person name="Carlton J."/>
            <person name="Rasko D.A."/>
            <person name="Paulsen I.T."/>
            <person name="Ren Q."/>
            <person name="Daugherty S.C."/>
            <person name="DeBoy R.T."/>
            <person name="Dodson R.J."/>
            <person name="Durkin A.S."/>
            <person name="Madupu R."/>
            <person name="Nelson W.C."/>
            <person name="Sullivan S.A."/>
            <person name="Rosovitz M.J."/>
            <person name="Haft D.H."/>
            <person name="Selengut J."/>
            <person name="Ward N."/>
        </authorList>
    </citation>
    <scope>NUCLEOTIDE SEQUENCE [LARGE SCALE GENOMIC DNA]</scope>
    <source>
        <strain>ATCC 700808 / DSM 15171 / DSS-3</strain>
    </source>
</reference>
<reference key="2">
    <citation type="journal article" date="2014" name="Stand. Genomic Sci.">
        <title>An updated genome annotation for the model marine bacterium Ruegeria pomeroyi DSS-3.</title>
        <authorList>
            <person name="Rivers A.R."/>
            <person name="Smith C.B."/>
            <person name="Moran M.A."/>
        </authorList>
    </citation>
    <scope>GENOME REANNOTATION</scope>
    <source>
        <strain>ATCC 700808 / DSM 15171 / DSS-3</strain>
    </source>
</reference>
<keyword id="KW-0963">Cytoplasm</keyword>
<keyword id="KW-0444">Lipid biosynthesis</keyword>
<keyword id="KW-0443">Lipid metabolism</keyword>
<keyword id="KW-0594">Phospholipid biosynthesis</keyword>
<keyword id="KW-1208">Phospholipid metabolism</keyword>
<keyword id="KW-1185">Reference proteome</keyword>
<keyword id="KW-0808">Transferase</keyword>
<protein>
    <recommendedName>
        <fullName evidence="1">Phosphate acyltransferase</fullName>
        <ecNumber evidence="1">2.3.1.274</ecNumber>
    </recommendedName>
    <alternativeName>
        <fullName evidence="1">Acyl-ACP phosphotransacylase</fullName>
    </alternativeName>
    <alternativeName>
        <fullName evidence="1">Acyl-[acyl-carrier-protein]--phosphate acyltransferase</fullName>
    </alternativeName>
    <alternativeName>
        <fullName evidence="1">Phosphate-acyl-ACP acyltransferase</fullName>
    </alternativeName>
</protein>
<accession>Q5LQJ6</accession>
<name>PLSX_RUEPO</name>
<feature type="chain" id="PRO_0000189934" description="Phosphate acyltransferase">
    <location>
        <begin position="1"/>
        <end position="371"/>
    </location>
</feature>